<gene>
    <name evidence="1" type="primary">rpmD</name>
    <name type="ordered locus">Aasi_0179</name>
</gene>
<feature type="chain" id="PRO_1000144645" description="Large ribosomal subunit protein uL30">
    <location>
        <begin position="1"/>
        <end position="60"/>
    </location>
</feature>
<dbReference type="EMBL" id="CP001102">
    <property type="protein sequence ID" value="ACE05624.1"/>
    <property type="molecule type" value="Genomic_DNA"/>
</dbReference>
<dbReference type="RefSeq" id="WP_012472389.1">
    <property type="nucleotide sequence ID" value="NC_010830.1"/>
</dbReference>
<dbReference type="SMR" id="B3EUK5"/>
<dbReference type="STRING" id="452471.Aasi_0179"/>
<dbReference type="KEGG" id="aas:Aasi_0179"/>
<dbReference type="eggNOG" id="COG1841">
    <property type="taxonomic scope" value="Bacteria"/>
</dbReference>
<dbReference type="HOGENOM" id="CLU_131047_1_1_10"/>
<dbReference type="OrthoDB" id="9812790at2"/>
<dbReference type="Proteomes" id="UP000001227">
    <property type="component" value="Chromosome"/>
</dbReference>
<dbReference type="GO" id="GO:0022625">
    <property type="term" value="C:cytosolic large ribosomal subunit"/>
    <property type="evidence" value="ECO:0007669"/>
    <property type="project" value="TreeGrafter"/>
</dbReference>
<dbReference type="GO" id="GO:0003735">
    <property type="term" value="F:structural constituent of ribosome"/>
    <property type="evidence" value="ECO:0007669"/>
    <property type="project" value="InterPro"/>
</dbReference>
<dbReference type="GO" id="GO:0006412">
    <property type="term" value="P:translation"/>
    <property type="evidence" value="ECO:0007669"/>
    <property type="project" value="UniProtKB-UniRule"/>
</dbReference>
<dbReference type="CDD" id="cd01658">
    <property type="entry name" value="Ribosomal_L30"/>
    <property type="match status" value="1"/>
</dbReference>
<dbReference type="Gene3D" id="3.30.1390.20">
    <property type="entry name" value="Ribosomal protein L30, ferredoxin-like fold domain"/>
    <property type="match status" value="1"/>
</dbReference>
<dbReference type="HAMAP" id="MF_01371_B">
    <property type="entry name" value="Ribosomal_uL30_B"/>
    <property type="match status" value="1"/>
</dbReference>
<dbReference type="InterPro" id="IPR036919">
    <property type="entry name" value="Ribo_uL30_ferredoxin-like_sf"/>
</dbReference>
<dbReference type="InterPro" id="IPR005996">
    <property type="entry name" value="Ribosomal_uL30_bac-type"/>
</dbReference>
<dbReference type="InterPro" id="IPR016082">
    <property type="entry name" value="Ribosomal_uL30_ferredoxin-like"/>
</dbReference>
<dbReference type="NCBIfam" id="TIGR01308">
    <property type="entry name" value="rpmD_bact"/>
    <property type="match status" value="1"/>
</dbReference>
<dbReference type="PANTHER" id="PTHR15892:SF2">
    <property type="entry name" value="LARGE RIBOSOMAL SUBUNIT PROTEIN UL30M"/>
    <property type="match status" value="1"/>
</dbReference>
<dbReference type="PANTHER" id="PTHR15892">
    <property type="entry name" value="MITOCHONDRIAL RIBOSOMAL PROTEIN L30"/>
    <property type="match status" value="1"/>
</dbReference>
<dbReference type="Pfam" id="PF00327">
    <property type="entry name" value="Ribosomal_L30"/>
    <property type="match status" value="1"/>
</dbReference>
<dbReference type="PIRSF" id="PIRSF002211">
    <property type="entry name" value="Ribosomal_L30_bac-type"/>
    <property type="match status" value="1"/>
</dbReference>
<dbReference type="SUPFAM" id="SSF55129">
    <property type="entry name" value="Ribosomal protein L30p/L7e"/>
    <property type="match status" value="1"/>
</dbReference>
<organism>
    <name type="scientific">Amoebophilus asiaticus (strain 5a2)</name>
    <dbReference type="NCBI Taxonomy" id="452471"/>
    <lineage>
        <taxon>Bacteria</taxon>
        <taxon>Pseudomonadati</taxon>
        <taxon>Bacteroidota</taxon>
        <taxon>Cytophagia</taxon>
        <taxon>Cytophagales</taxon>
        <taxon>Amoebophilaceae</taxon>
        <taxon>Candidatus Amoebophilus</taxon>
    </lineage>
</organism>
<protein>
    <recommendedName>
        <fullName evidence="1">Large ribosomal subunit protein uL30</fullName>
    </recommendedName>
    <alternativeName>
        <fullName evidence="2">50S ribosomal protein L30</fullName>
    </alternativeName>
</protein>
<comment type="subunit">
    <text evidence="1">Part of the 50S ribosomal subunit.</text>
</comment>
<comment type="similarity">
    <text evidence="1">Belongs to the universal ribosomal protein uL30 family.</text>
</comment>
<sequence length="60" mass="6884">MAKVRITQVRSTIKCPMRQKLTIKALKLGRINKSVELEFTPQIQGMVRQVHHLVTTENIA</sequence>
<accession>B3EUK5</accession>
<evidence type="ECO:0000255" key="1">
    <source>
        <dbReference type="HAMAP-Rule" id="MF_01371"/>
    </source>
</evidence>
<evidence type="ECO:0000305" key="2"/>
<keyword id="KW-1185">Reference proteome</keyword>
<keyword id="KW-0687">Ribonucleoprotein</keyword>
<keyword id="KW-0689">Ribosomal protein</keyword>
<proteinExistence type="inferred from homology"/>
<reference key="1">
    <citation type="journal article" date="2010" name="J. Bacteriol.">
        <title>The genome of the amoeba symbiont 'Candidatus Amoebophilus asiaticus' reveals common mechanisms for host cell interaction among amoeba-associated bacteria.</title>
        <authorList>
            <person name="Schmitz-Esser S."/>
            <person name="Tischler P."/>
            <person name="Arnold R."/>
            <person name="Montanaro J."/>
            <person name="Wagner M."/>
            <person name="Rattei T."/>
            <person name="Horn M."/>
        </authorList>
    </citation>
    <scope>NUCLEOTIDE SEQUENCE [LARGE SCALE GENOMIC DNA]</scope>
    <source>
        <strain>5a2</strain>
    </source>
</reference>
<name>RL30_AMOA5</name>